<evidence type="ECO:0000250" key="1"/>
<evidence type="ECO:0000255" key="2"/>
<evidence type="ECO:0000255" key="3">
    <source>
        <dbReference type="PROSITE-ProRule" id="PRU00366"/>
    </source>
</evidence>
<evidence type="ECO:0000256" key="4">
    <source>
        <dbReference type="SAM" id="MobiDB-lite"/>
    </source>
</evidence>
<evidence type="ECO:0000269" key="5">
    <source>
    </source>
</evidence>
<evidence type="ECO:0000305" key="6"/>
<organism>
    <name type="scientific">Arabidopsis thaliana</name>
    <name type="common">Mouse-ear cress</name>
    <dbReference type="NCBI Taxonomy" id="3702"/>
    <lineage>
        <taxon>Eukaryota</taxon>
        <taxon>Viridiplantae</taxon>
        <taxon>Streptophyta</taxon>
        <taxon>Embryophyta</taxon>
        <taxon>Tracheophyta</taxon>
        <taxon>Spermatophyta</taxon>
        <taxon>Magnoliopsida</taxon>
        <taxon>eudicotyledons</taxon>
        <taxon>Gunneridae</taxon>
        <taxon>Pentapetalae</taxon>
        <taxon>rosids</taxon>
        <taxon>malvids</taxon>
        <taxon>Brassicales</taxon>
        <taxon>Brassicaceae</taxon>
        <taxon>Camelineae</taxon>
        <taxon>Arabidopsis</taxon>
    </lineage>
</organism>
<proteinExistence type="uncertain"/>
<dbReference type="EMBL" id="AY560891">
    <property type="protein sequence ID" value="AAT44958.1"/>
    <property type="molecule type" value="mRNA"/>
</dbReference>
<dbReference type="EMBL" id="AC007020">
    <property type="protein sequence ID" value="AAD25670.1"/>
    <property type="status" value="ALT_SEQ"/>
    <property type="molecule type" value="Genomic_DNA"/>
</dbReference>
<dbReference type="EMBL" id="CP002685">
    <property type="protein sequence ID" value="AEC09817.1"/>
    <property type="molecule type" value="Genomic_DNA"/>
</dbReference>
<dbReference type="PIR" id="D84828">
    <property type="entry name" value="D84828"/>
</dbReference>
<dbReference type="RefSeq" id="NP_181566.2">
    <property type="nucleotide sequence ID" value="NM_129595.3"/>
</dbReference>
<dbReference type="SMR" id="Q9SIZ0"/>
<dbReference type="BioGRID" id="3966">
    <property type="interactions" value="5"/>
</dbReference>
<dbReference type="FunCoup" id="Q9SIZ0">
    <property type="interactions" value="6"/>
</dbReference>
<dbReference type="IntAct" id="Q9SIZ0">
    <property type="interactions" value="5"/>
</dbReference>
<dbReference type="STRING" id="3702.Q9SIZ0"/>
<dbReference type="PaxDb" id="3702-AT2G40350.1"/>
<dbReference type="EnsemblPlants" id="AT2G40350.1">
    <property type="protein sequence ID" value="AT2G40350.1"/>
    <property type="gene ID" value="AT2G40350"/>
</dbReference>
<dbReference type="GeneID" id="818628"/>
<dbReference type="Gramene" id="AT2G40350.1">
    <property type="protein sequence ID" value="AT2G40350.1"/>
    <property type="gene ID" value="AT2G40350"/>
</dbReference>
<dbReference type="KEGG" id="ath:AT2G40350"/>
<dbReference type="Araport" id="AT2G40350"/>
<dbReference type="TAIR" id="AT2G40350"/>
<dbReference type="eggNOG" id="ENOG502QTBU">
    <property type="taxonomic scope" value="Eukaryota"/>
</dbReference>
<dbReference type="HOGENOM" id="CLU_1680330_0_0_1"/>
<dbReference type="InParanoid" id="Q9SIZ0"/>
<dbReference type="PhylomeDB" id="Q9SIZ0"/>
<dbReference type="Proteomes" id="UP000006548">
    <property type="component" value="Chromosome 2"/>
</dbReference>
<dbReference type="ExpressionAtlas" id="Q9SIZ0">
    <property type="expression patterns" value="baseline and differential"/>
</dbReference>
<dbReference type="GO" id="GO:0005634">
    <property type="term" value="C:nucleus"/>
    <property type="evidence" value="ECO:0007669"/>
    <property type="project" value="UniProtKB-SubCell"/>
</dbReference>
<dbReference type="GO" id="GO:0003700">
    <property type="term" value="F:DNA-binding transcription factor activity"/>
    <property type="evidence" value="ECO:0000250"/>
    <property type="project" value="TAIR"/>
</dbReference>
<dbReference type="GO" id="GO:0000976">
    <property type="term" value="F:transcription cis-regulatory region binding"/>
    <property type="evidence" value="ECO:0000353"/>
    <property type="project" value="TAIR"/>
</dbReference>
<dbReference type="GO" id="GO:0010286">
    <property type="term" value="P:heat acclimation"/>
    <property type="evidence" value="ECO:0000270"/>
    <property type="project" value="TAIR"/>
</dbReference>
<dbReference type="CDD" id="cd00018">
    <property type="entry name" value="AP2"/>
    <property type="match status" value="1"/>
</dbReference>
<dbReference type="FunFam" id="3.30.730.10:FF:000001">
    <property type="entry name" value="Ethylene-responsive transcription factor 2"/>
    <property type="match status" value="1"/>
</dbReference>
<dbReference type="Gene3D" id="3.30.730.10">
    <property type="entry name" value="AP2/ERF domain"/>
    <property type="match status" value="1"/>
</dbReference>
<dbReference type="InterPro" id="IPR001471">
    <property type="entry name" value="AP2/ERF_dom"/>
</dbReference>
<dbReference type="InterPro" id="IPR036955">
    <property type="entry name" value="AP2/ERF_dom_sf"/>
</dbReference>
<dbReference type="InterPro" id="IPR016177">
    <property type="entry name" value="DNA-bd_dom_sf"/>
</dbReference>
<dbReference type="PANTHER" id="PTHR31241:SF37">
    <property type="entry name" value="DEHYDRATION-RESPONSIVE ELEMENT-BINDING PROTEIN 2A-RELATED"/>
    <property type="match status" value="1"/>
</dbReference>
<dbReference type="PANTHER" id="PTHR31241">
    <property type="entry name" value="DEHYDRATION-RESPONSIVE ELEMENT-BINDING PROTEIN 2C"/>
    <property type="match status" value="1"/>
</dbReference>
<dbReference type="Pfam" id="PF00847">
    <property type="entry name" value="AP2"/>
    <property type="match status" value="1"/>
</dbReference>
<dbReference type="PRINTS" id="PR00367">
    <property type="entry name" value="ETHRSPELEMNT"/>
</dbReference>
<dbReference type="SMART" id="SM00380">
    <property type="entry name" value="AP2"/>
    <property type="match status" value="1"/>
</dbReference>
<dbReference type="SUPFAM" id="SSF54171">
    <property type="entry name" value="DNA-binding domain"/>
    <property type="match status" value="1"/>
</dbReference>
<dbReference type="PROSITE" id="PS51032">
    <property type="entry name" value="AP2_ERF"/>
    <property type="match status" value="1"/>
</dbReference>
<gene>
    <name type="primary">DREB2H</name>
    <name type="synonym">ERF047</name>
    <name type="ordered locus">At2g40350</name>
    <name type="ORF">T3G21.12</name>
</gene>
<name>DRE2H_ARATH</name>
<sequence length="157" mass="17792">MPRKRKSRGTRDVAEILRKWREYNEQTEADSCIDGGGSKPIRKAPPKRSRKGCMKGKGGPENGICDYTGVRQRTWGKWVAEIREPGRGAKLWLGTFSSSYEAALAYDEASKAIYGQSARLNLPLLPLCQARLLHFLMNLKFVHVRIQMQDLVLVRSD</sequence>
<reference key="1">
    <citation type="submission" date="2004-03" db="EMBL/GenBank/DDBJ databases">
        <title>Molecular cloning, expression, phylogenetic and functional characterization of the Arabidopsis AP2/EREBP transcription factor family.</title>
        <authorList>
            <person name="Pan Y."/>
            <person name="Gong W."/>
            <person name="Liu D."/>
            <person name="Fu Q."/>
            <person name="Mei W.-Q."/>
            <person name="Song W.-Q."/>
            <person name="Ma L.-G."/>
            <person name="Luo J.-C."/>
            <person name="Deng X.-W."/>
            <person name="Zhu Y.-X."/>
        </authorList>
    </citation>
    <scope>NUCLEOTIDE SEQUENCE [MRNA]</scope>
</reference>
<reference key="2">
    <citation type="journal article" date="1999" name="Nature">
        <title>Sequence and analysis of chromosome 2 of the plant Arabidopsis thaliana.</title>
        <authorList>
            <person name="Lin X."/>
            <person name="Kaul S."/>
            <person name="Rounsley S.D."/>
            <person name="Shea T.P."/>
            <person name="Benito M.-I."/>
            <person name="Town C.D."/>
            <person name="Fujii C.Y."/>
            <person name="Mason T.M."/>
            <person name="Bowman C.L."/>
            <person name="Barnstead M.E."/>
            <person name="Feldblyum T.V."/>
            <person name="Buell C.R."/>
            <person name="Ketchum K.A."/>
            <person name="Lee J.J."/>
            <person name="Ronning C.M."/>
            <person name="Koo H.L."/>
            <person name="Moffat K.S."/>
            <person name="Cronin L.A."/>
            <person name="Shen M."/>
            <person name="Pai G."/>
            <person name="Van Aken S."/>
            <person name="Umayam L."/>
            <person name="Tallon L.J."/>
            <person name="Gill J.E."/>
            <person name="Adams M.D."/>
            <person name="Carrera A.J."/>
            <person name="Creasy T.H."/>
            <person name="Goodman H.M."/>
            <person name="Somerville C.R."/>
            <person name="Copenhaver G.P."/>
            <person name="Preuss D."/>
            <person name="Nierman W.C."/>
            <person name="White O."/>
            <person name="Eisen J.A."/>
            <person name="Salzberg S.L."/>
            <person name="Fraser C.M."/>
            <person name="Venter J.C."/>
        </authorList>
    </citation>
    <scope>NUCLEOTIDE SEQUENCE [LARGE SCALE GENOMIC DNA]</scope>
    <source>
        <strain>cv. Columbia</strain>
    </source>
</reference>
<reference key="3">
    <citation type="journal article" date="2017" name="Plant J.">
        <title>Araport11: a complete reannotation of the Arabidopsis thaliana reference genome.</title>
        <authorList>
            <person name="Cheng C.Y."/>
            <person name="Krishnakumar V."/>
            <person name="Chan A.P."/>
            <person name="Thibaud-Nissen F."/>
            <person name="Schobel S."/>
            <person name="Town C.D."/>
        </authorList>
    </citation>
    <scope>GENOME REANNOTATION</scope>
    <source>
        <strain>cv. Columbia</strain>
    </source>
</reference>
<reference key="4">
    <citation type="journal article" date="2002" name="Biochem. Biophys. Res. Commun.">
        <title>DNA-binding specificity of the ERF/AP2 domain of Arabidopsis DREBs, transcription factors involved in dehydration- and cold-inducible gene expression.</title>
        <authorList>
            <person name="Sakuma Y."/>
            <person name="Liu Q."/>
            <person name="Dubouzet J.G."/>
            <person name="Abe H."/>
            <person name="Shinozaki K."/>
            <person name="Yamaguchi-Shinozaki K."/>
        </authorList>
    </citation>
    <scope>GENE FAMILY</scope>
    <scope>FUNCTION</scope>
</reference>
<reference key="5">
    <citation type="journal article" date="2006" name="Plant Physiol.">
        <title>Genome-wide analysis of the ERF gene family in Arabidopsis and rice.</title>
        <authorList>
            <person name="Nakano T."/>
            <person name="Suzuki K."/>
            <person name="Fujimura T."/>
            <person name="Shinshi H."/>
        </authorList>
    </citation>
    <scope>GENE FAMILY</scope>
    <scope>NOMENCLATURE</scope>
</reference>
<feature type="chain" id="PRO_0000112541" description="Putative dehydration-responsive element-binding protein 2H">
    <location>
        <begin position="1"/>
        <end position="157"/>
    </location>
</feature>
<feature type="DNA-binding region" description="AP2/ERF" evidence="3">
    <location>
        <begin position="66"/>
        <end position="123"/>
    </location>
</feature>
<feature type="region of interest" description="Disordered" evidence="4">
    <location>
        <begin position="29"/>
        <end position="57"/>
    </location>
</feature>
<feature type="short sequence motif" description="Nuclear localization signal" evidence="2">
    <location>
        <begin position="5"/>
        <end position="21"/>
    </location>
</feature>
<feature type="compositionally biased region" description="Basic residues" evidence="4">
    <location>
        <begin position="40"/>
        <end position="54"/>
    </location>
</feature>
<feature type="sequence conflict" description="In Ref. 1; AAT44958." evidence="6" ref="1">
    <original>F</original>
    <variation>I</variation>
    <location>
        <position position="96"/>
    </location>
</feature>
<keyword id="KW-0010">Activator</keyword>
<keyword id="KW-0238">DNA-binding</keyword>
<keyword id="KW-0539">Nucleus</keyword>
<keyword id="KW-1185">Reference proteome</keyword>
<keyword id="KW-0804">Transcription</keyword>
<keyword id="KW-0805">Transcription regulation</keyword>
<comment type="function">
    <text evidence="1 5">Putative transcriptional activator that binds specifically to the DNA sequence 5'-[AG]CCGAC-3'.</text>
</comment>
<comment type="subcellular location">
    <subcellularLocation>
        <location evidence="6">Nucleus</location>
    </subcellularLocation>
</comment>
<comment type="similarity">
    <text evidence="6">Belongs to the AP2/ERF transcription factor family. ERF subfamily.</text>
</comment>
<comment type="caution">
    <text evidence="6">Could be the product of a pseudogene.</text>
</comment>
<comment type="sequence caution" evidence="6">
    <conflict type="erroneous gene model prediction">
        <sequence resource="EMBL-CDS" id="AAD25670"/>
    </conflict>
</comment>
<protein>
    <recommendedName>
        <fullName>Putative dehydration-responsive element-binding protein 2H</fullName>
        <shortName>Protein DREB2H</shortName>
    </recommendedName>
</protein>
<accession>Q9SIZ0</accession>
<accession>Q6J9N4</accession>